<organism>
    <name type="scientific">Human papillomavirus type 1</name>
    <name type="common">Human papillomavirus type 1a</name>
    <dbReference type="NCBI Taxonomy" id="10583"/>
    <lineage>
        <taxon>Viruses</taxon>
        <taxon>Monodnaviria</taxon>
        <taxon>Shotokuvirae</taxon>
        <taxon>Cossaviricota</taxon>
        <taxon>Papovaviricetes</taxon>
        <taxon>Zurhausenvirales</taxon>
        <taxon>Papillomaviridae</taxon>
        <taxon>Firstpapillomavirinae</taxon>
        <taxon>Mupapillomavirus</taxon>
        <taxon>Mupapillomavirus 1</taxon>
    </lineage>
</organism>
<keyword id="KW-0010">Activator</keyword>
<keyword id="KW-0238">DNA-binding</keyword>
<keyword id="KW-0244">Early protein</keyword>
<keyword id="KW-1035">Host cytoplasm</keyword>
<keyword id="KW-1048">Host nucleus</keyword>
<keyword id="KW-0945">Host-virus interaction</keyword>
<keyword id="KW-1090">Inhibition of host innate immune response by virus</keyword>
<keyword id="KW-0479">Metal-binding</keyword>
<keyword id="KW-1119">Modulation of host cell apoptosis by virus</keyword>
<keyword id="KW-1185">Reference proteome</keyword>
<keyword id="KW-0804">Transcription</keyword>
<keyword id="KW-0805">Transcription regulation</keyword>
<keyword id="KW-0899">Viral immunoevasion</keyword>
<keyword id="KW-0862">Zinc</keyword>
<keyword id="KW-0863">Zinc-finger</keyword>
<proteinExistence type="inferred from homology"/>
<reference key="1">
    <citation type="journal article" date="1982" name="EMBO J.">
        <title>Human papillomavirus 1a complete DNA sequence: a novel type of genome organization among papovaviridae.</title>
        <authorList>
            <person name="Danos O."/>
            <person name="Katinka M."/>
            <person name="Yaniv M."/>
        </authorList>
    </citation>
    <scope>NUCLEOTIDE SEQUENCE [GENOMIC DNA]</scope>
</reference>
<reference key="2">
    <citation type="submission" date="1985-01" db="EMBL/GenBank/DDBJ databases">
        <authorList>
            <person name="Danos O."/>
        </authorList>
    </citation>
    <scope>SEQUENCE REVISION</scope>
</reference>
<reference key="3">
    <citation type="journal article" date="1983" name="J. Virol.">
        <title>Comparative analysis of the human type 1a and bovine type 1 papillomavirus genomes.</title>
        <authorList>
            <person name="Danos O."/>
            <person name="Engel L.W."/>
            <person name="Chen E.Y."/>
            <person name="Yaniv M."/>
            <person name="Howley P.M."/>
        </authorList>
    </citation>
    <scope>COMPARATIVE ANALYSIS OF HUMAN TYPE 1A AND BOVINE TYPE 1 GENOMES</scope>
</reference>
<sequence>MATPIRTVRQLSESLCIPYIDVLLPCNFCNYFLSNAEKLLFDHFDLHLVWRDNLVFGCCQGCARTVSLLEFVLYYQESYEVPEIEEILDRPLLQIELRCVTCIKKLSVAEKLEVVSNGERVHRVRNRLKAKCSLCRLYAI</sequence>
<evidence type="ECO:0000255" key="1">
    <source>
        <dbReference type="HAMAP-Rule" id="MF_04006"/>
    </source>
</evidence>
<evidence type="ECO:0000305" key="2"/>
<comment type="function">
    <text evidence="1">Plays a major role in the induction and maintenance of cellular transformation. E6 associates with host UBE3A/E6-AP ubiquitin-protein ligase and modulates its activity. Protects host keratinocytes from apoptosis by mediating the degradation of host BAK1. May also inhibit host immune response.</text>
</comment>
<comment type="subunit">
    <text evidence="1">Forms homodimers. Interacts with ubiquitin-protein ligase UBE3A/E6-AP; this interaction stimulates UBE3A ubiquitin activity. Interacts with host BAK1.</text>
</comment>
<comment type="subcellular location">
    <subcellularLocation>
        <location evidence="1">Host cytoplasm</location>
    </subcellularLocation>
    <subcellularLocation>
        <location evidence="1">Host nucleus</location>
    </subcellularLocation>
</comment>
<comment type="similarity">
    <text evidence="1 2">Belongs to the papillomaviridae E6 protein family.</text>
</comment>
<gene>
    <name evidence="1" type="primary">E6</name>
</gene>
<accession>P06929</accession>
<name>VE6_HPV1</name>
<organismHost>
    <name type="scientific">Homo sapiens</name>
    <name type="common">Human</name>
    <dbReference type="NCBI Taxonomy" id="9606"/>
</organismHost>
<dbReference type="EMBL" id="V01116">
    <property type="protein sequence ID" value="CAA24314.1"/>
    <property type="molecule type" value="Genomic_DNA"/>
</dbReference>
<dbReference type="PIR" id="B17475">
    <property type="entry name" value="W6WL"/>
</dbReference>
<dbReference type="RefSeq" id="NP_040305.1">
    <property type="nucleotide sequence ID" value="NC_001356.1"/>
</dbReference>
<dbReference type="SMR" id="P06929"/>
<dbReference type="IntAct" id="P06929">
    <property type="interactions" value="53"/>
</dbReference>
<dbReference type="MINT" id="P06929"/>
<dbReference type="GeneID" id="1489169"/>
<dbReference type="KEGG" id="vg:1489169"/>
<dbReference type="Proteomes" id="UP000006372">
    <property type="component" value="Segment"/>
</dbReference>
<dbReference type="GO" id="GO:0030430">
    <property type="term" value="C:host cell cytoplasm"/>
    <property type="evidence" value="ECO:0007669"/>
    <property type="project" value="UniProtKB-SubCell"/>
</dbReference>
<dbReference type="GO" id="GO:0042025">
    <property type="term" value="C:host cell nucleus"/>
    <property type="evidence" value="ECO:0007669"/>
    <property type="project" value="UniProtKB-SubCell"/>
</dbReference>
<dbReference type="GO" id="GO:0003677">
    <property type="term" value="F:DNA binding"/>
    <property type="evidence" value="ECO:0007669"/>
    <property type="project" value="UniProtKB-UniRule"/>
</dbReference>
<dbReference type="GO" id="GO:0008270">
    <property type="term" value="F:zinc ion binding"/>
    <property type="evidence" value="ECO:0007669"/>
    <property type="project" value="UniProtKB-KW"/>
</dbReference>
<dbReference type="GO" id="GO:0006351">
    <property type="term" value="P:DNA-templated transcription"/>
    <property type="evidence" value="ECO:0007669"/>
    <property type="project" value="UniProtKB-UniRule"/>
</dbReference>
<dbReference type="GO" id="GO:0006355">
    <property type="term" value="P:regulation of DNA-templated transcription"/>
    <property type="evidence" value="ECO:0007669"/>
    <property type="project" value="UniProtKB-UniRule"/>
</dbReference>
<dbReference type="GO" id="GO:0052150">
    <property type="term" value="P:symbiont-mediated perturbation of host apoptosis"/>
    <property type="evidence" value="ECO:0007669"/>
    <property type="project" value="UniProtKB-KW"/>
</dbReference>
<dbReference type="GO" id="GO:0039648">
    <property type="term" value="P:symbiont-mediated perturbation of host ubiquitin-like protein modification"/>
    <property type="evidence" value="ECO:0007669"/>
    <property type="project" value="UniProtKB-UniRule"/>
</dbReference>
<dbReference type="GO" id="GO:0052170">
    <property type="term" value="P:symbiont-mediated suppression of host innate immune response"/>
    <property type="evidence" value="ECO:0007669"/>
    <property type="project" value="UniProtKB-KW"/>
</dbReference>
<dbReference type="GO" id="GO:0039502">
    <property type="term" value="P:symbiont-mediated suppression of host type I interferon-mediated signaling pathway"/>
    <property type="evidence" value="ECO:0007669"/>
    <property type="project" value="UniProtKB-UniRule"/>
</dbReference>
<dbReference type="Gene3D" id="3.30.240.40">
    <property type="entry name" value="E6 early regulatory protein"/>
    <property type="match status" value="2"/>
</dbReference>
<dbReference type="HAMAP" id="MF_04006">
    <property type="entry name" value="HPV_E6"/>
    <property type="match status" value="1"/>
</dbReference>
<dbReference type="InterPro" id="IPR001334">
    <property type="entry name" value="E6"/>
</dbReference>
<dbReference type="InterPro" id="IPR038575">
    <property type="entry name" value="E6_sf"/>
</dbReference>
<dbReference type="Pfam" id="PF00518">
    <property type="entry name" value="E6"/>
    <property type="match status" value="1"/>
</dbReference>
<dbReference type="SUPFAM" id="SSF161229">
    <property type="entry name" value="E6 C-terminal domain-like"/>
    <property type="match status" value="2"/>
</dbReference>
<protein>
    <recommendedName>
        <fullName evidence="1">Protein E6</fullName>
    </recommendedName>
</protein>
<feature type="chain" id="PRO_0000133319" description="Protein E6">
    <location>
        <begin position="1"/>
        <end position="140"/>
    </location>
</feature>
<feature type="zinc finger region" evidence="1">
    <location>
        <begin position="26"/>
        <end position="62"/>
    </location>
</feature>
<feature type="zinc finger region" evidence="1">
    <location>
        <begin position="99"/>
        <end position="135"/>
    </location>
</feature>